<evidence type="ECO:0000250" key="1"/>
<evidence type="ECO:0000250" key="2">
    <source>
        <dbReference type="UniProtKB" id="P00924"/>
    </source>
</evidence>
<evidence type="ECO:0000250" key="3">
    <source>
        <dbReference type="UniProtKB" id="P06733"/>
    </source>
</evidence>
<evidence type="ECO:0000269" key="4">
    <source>
    </source>
</evidence>
<evidence type="ECO:0000269" key="5">
    <source>
    </source>
</evidence>
<evidence type="ECO:0000269" key="6">
    <source>
    </source>
</evidence>
<evidence type="ECO:0000269" key="7">
    <source>
    </source>
</evidence>
<evidence type="ECO:0000305" key="8"/>
<evidence type="ECO:0007744" key="9">
    <source>
    </source>
</evidence>
<evidence type="ECO:0007744" key="10">
    <source>
    </source>
</evidence>
<evidence type="ECO:0007744" key="11">
    <source>
    </source>
</evidence>
<comment type="function">
    <text evidence="3">Glycolytic enzyme the catalyzes the conversion of 2-phosphoglycerate to phosphoenolpyruvate. In addition to glycolysis, involved in various processes such as growth control, hypoxia tolerance and allergic responses. May also function in the intravascular and pericellular fibrinolytic system due to its ability to serve as a receptor and activator of plasminogen on the cell surface of several cell-types such as leukocytes and neurons. Stimulates immunoglobulin production.</text>
</comment>
<comment type="catalytic activity">
    <reaction evidence="3">
        <text>(2R)-2-phosphoglycerate = phosphoenolpyruvate + H2O</text>
        <dbReference type="Rhea" id="RHEA:10164"/>
        <dbReference type="ChEBI" id="CHEBI:15377"/>
        <dbReference type="ChEBI" id="CHEBI:58289"/>
        <dbReference type="ChEBI" id="CHEBI:58702"/>
        <dbReference type="EC" id="4.2.1.11"/>
    </reaction>
</comment>
<comment type="cofactor">
    <cofactor evidence="3">
        <name>Mg(2+)</name>
        <dbReference type="ChEBI" id="CHEBI:18420"/>
    </cofactor>
    <text evidence="3">Binds two Mg(2+) per subunit. Required for catalysis and for stabilizing the dimer.</text>
</comment>
<comment type="pathway">
    <text>Carbohydrate degradation; glycolysis; pyruvate from D-glyceraldehyde 3-phosphate: step 4/5.</text>
</comment>
<comment type="subunit">
    <text evidence="3 6 7">Mammalian enolase is composed of 3 isozyme subunits, alpha, beta and gamma, which can form homodimers or heterodimers which are cell-type and development-specific. ENO1 interacts with PLG in the neuronal plasma membrane and promotes its activation. The C-terminal lysine is required for this binding (By similarity). In vitro, interacts with several glycolytic enzymes including PKM, PGM, CKM and aldolase (PubMed:9169614). Also binds troponin, in vitro (PubMed:9169614). Interacts with ENO4 and PGAM2 (PubMed:23446454). Interacts with CMTM6 (By similarity).</text>
</comment>
<comment type="subcellular location">
    <subcellularLocation>
        <location evidence="1">Cytoplasm</location>
    </subcellularLocation>
    <subcellularLocation>
        <location evidence="1">Cell membrane</location>
    </subcellularLocation>
    <text evidence="1 4">Can translocate to the plasma membrane in either the homodimeric (alpha/alpha) or heterodimeric (alpha/gamma) form (By similarity). ENO1 is localized to the M-band.</text>
</comment>
<comment type="tissue specificity">
    <text evidence="4 6">Testis. Found in the principal piece of sperm tail (at protein level). The alpha/alpha homodimer is expressed in embryo and in most adult tissues. The alpha/beta heterodimer and the beta/beta homodimer are found in striated muscle, and the alpha/gamma heterodimer and the gamma/gamma homodimer in neurons. In striated muscle, expression of ENO1 appears to be independent of fiber type.</text>
</comment>
<comment type="developmental stage">
    <text evidence="7">During ontogenesis, there is a transition from the alpha/alpha homodimer to the alpha/beta heterodimer in striated muscle cells, and to the alpha/gamma heterodimer in nerve cells. In embryonic muscle, ENO1 is highly expressed until 17 dpc. Decreased levels from P5.</text>
</comment>
<comment type="PTM">
    <text evidence="5">ISGylated.</text>
</comment>
<comment type="PTM">
    <text evidence="3">Lysine 2-hydroxyisobutyrylation (Khib) by p300/EP300 activates the phosphopyruvate hydratase activity.</text>
</comment>
<comment type="similarity">
    <text evidence="8">Belongs to the enolase family.</text>
</comment>
<gene>
    <name type="primary">Eno1</name>
    <name type="synonym">Eno-1</name>
</gene>
<protein>
    <recommendedName>
        <fullName>Alpha-enolase</fullName>
        <ecNumber>4.2.1.11</ecNumber>
    </recommendedName>
    <alternativeName>
        <fullName>2-phospho-D-glycerate hydro-lyase</fullName>
    </alternativeName>
    <alternativeName>
        <fullName>Enolase 1</fullName>
    </alternativeName>
    <alternativeName>
        <fullName>Non-neural enolase</fullName>
        <shortName>NNE</shortName>
    </alternativeName>
</protein>
<sequence>MSILRIHAREIFDSRGNPTVEVDLYTAKGLFRAAVPSGASTGIYEALELRDNDKTRFMGKGVSQAVEHINKTIAPALVSKKVNVVEQEKIDKLMIEMDGTENKSKFGANAILGVSLAVCKAGAVEKGVPLYRHIADLAGNPEVILPVPAFNVINGGSHAGNKLAMQEFMILPVGASSFREAMRIGAEVYHNLKNVIKEKYGKDATNVGDEGGFAPNILENKEALELLKTAIAKAGYTDQVVIGMDVAASEFYRSGKYDLDFKSPDDPSRYITPDQLADLYKSFVQNYPVVSIEDPFDQDDWGAWQKFTASAGIQVVGDDLTVTNPKRIAKAASEKSCNCLLLKVNQIGSVTESLQACKLAQSNGWGVMVSHRSGETEDTFIADLVVGLCTGQIKTGAPCRSERLAKYNQILRIEEELGSKAKFAGRSFRNPLAK</sequence>
<proteinExistence type="evidence at protein level"/>
<dbReference type="EC" id="4.2.1.11"/>
<dbReference type="EMBL" id="X52379">
    <property type="protein sequence ID" value="CAA36605.1"/>
    <property type="molecule type" value="mRNA"/>
</dbReference>
<dbReference type="EMBL" id="AK002336">
    <property type="protein sequence ID" value="BAB22021.1"/>
    <property type="molecule type" value="mRNA"/>
</dbReference>
<dbReference type="EMBL" id="BC003891">
    <property type="protein sequence ID" value="AAH03891.1"/>
    <property type="molecule type" value="mRNA"/>
</dbReference>
<dbReference type="EMBL" id="BC004017">
    <property type="protein sequence ID" value="AAH04017.1"/>
    <property type="molecule type" value="mRNA"/>
</dbReference>
<dbReference type="EMBL" id="BC010685">
    <property type="protein sequence ID" value="AAH10685.1"/>
    <property type="molecule type" value="mRNA"/>
</dbReference>
<dbReference type="EMBL" id="BC024644">
    <property type="protein sequence ID" value="AAH24644.1"/>
    <property type="molecule type" value="mRNA"/>
</dbReference>
<dbReference type="EMBL" id="BC085098">
    <property type="protein sequence ID" value="AAH85098.1"/>
    <property type="molecule type" value="mRNA"/>
</dbReference>
<dbReference type="CCDS" id="CCDS18971.1"/>
<dbReference type="PIR" id="S10246">
    <property type="entry name" value="S10246"/>
</dbReference>
<dbReference type="RefSeq" id="NP_001020559.1">
    <property type="nucleotide sequence ID" value="NM_001025388.1"/>
</dbReference>
<dbReference type="RefSeq" id="NP_001366057.1">
    <property type="nucleotide sequence ID" value="NM_001379128.1"/>
</dbReference>
<dbReference type="RefSeq" id="NP_001416164.1">
    <property type="nucleotide sequence ID" value="NM_001429235.1"/>
</dbReference>
<dbReference type="RefSeq" id="NP_001416165.1">
    <property type="nucleotide sequence ID" value="NM_001429236.1"/>
</dbReference>
<dbReference type="RefSeq" id="NP_001416166.1">
    <property type="nucleotide sequence ID" value="NM_001429237.1"/>
</dbReference>
<dbReference type="RefSeq" id="NP_001416167.1">
    <property type="nucleotide sequence ID" value="NM_001429238.1"/>
</dbReference>
<dbReference type="RefSeq" id="NP_075608.2">
    <property type="nucleotide sequence ID" value="NM_023119.3"/>
</dbReference>
<dbReference type="RefSeq" id="XP_006538588.2">
    <property type="nucleotide sequence ID" value="XM_006538525.2"/>
</dbReference>
<dbReference type="SMR" id="P17182"/>
<dbReference type="BioGRID" id="199451">
    <property type="interactions" value="34"/>
</dbReference>
<dbReference type="BioGRID" id="241069">
    <property type="interactions" value="4"/>
</dbReference>
<dbReference type="FunCoup" id="P17182">
    <property type="interactions" value="1816"/>
</dbReference>
<dbReference type="IntAct" id="P17182">
    <property type="interactions" value="14"/>
</dbReference>
<dbReference type="MINT" id="P17182"/>
<dbReference type="STRING" id="10090.ENSMUSP00000075513"/>
<dbReference type="CarbonylDB" id="P17182"/>
<dbReference type="GlyGen" id="P17182">
    <property type="glycosylation" value="3 sites, 2 N-linked glycans (2 sites), 1 O-linked glycan (1 site)"/>
</dbReference>
<dbReference type="iPTMnet" id="P17182"/>
<dbReference type="PhosphoSitePlus" id="P17182"/>
<dbReference type="SwissPalm" id="P17182"/>
<dbReference type="REPRODUCTION-2DPAGE" id="IPI00462072"/>
<dbReference type="REPRODUCTION-2DPAGE" id="P17182"/>
<dbReference type="CPTAC" id="non-CPTAC-3347"/>
<dbReference type="CPTAC" id="non-CPTAC-3348"/>
<dbReference type="jPOST" id="P17182"/>
<dbReference type="PaxDb" id="10090-ENSMUSP00000075513"/>
<dbReference type="PeptideAtlas" id="P17182"/>
<dbReference type="ProteomicsDB" id="275667"/>
<dbReference type="Pumba" id="P17182"/>
<dbReference type="DNASU" id="13806"/>
<dbReference type="DNASU" id="433182"/>
<dbReference type="Ensembl" id="ENSMUST00000076155.6">
    <property type="protein sequence ID" value="ENSMUSP00000075513.5"/>
    <property type="gene ID" value="ENSMUSG00000059040.6"/>
</dbReference>
<dbReference type="Ensembl" id="ENSMUST00000080926.13">
    <property type="protein sequence ID" value="ENSMUSP00000079727.7"/>
    <property type="gene ID" value="ENSMUSG00000063524.14"/>
</dbReference>
<dbReference type="Ensembl" id="ENSMUST00000235307.2">
    <property type="protein sequence ID" value="ENSMUSP00000157807.2"/>
    <property type="gene ID" value="ENSMUSG00000059040.6"/>
</dbReference>
<dbReference type="GeneID" id="13806"/>
<dbReference type="GeneID" id="433182"/>
<dbReference type="KEGG" id="mmu:13806"/>
<dbReference type="KEGG" id="mmu:433182"/>
<dbReference type="UCSC" id="uc008ewh.1">
    <property type="organism name" value="mouse"/>
</dbReference>
<dbReference type="AGR" id="MGI:95393"/>
<dbReference type="CTD" id="2023"/>
<dbReference type="CTD" id="433182"/>
<dbReference type="MGI" id="MGI:95393">
    <property type="gene designation" value="Eno1"/>
</dbReference>
<dbReference type="VEuPathDB" id="HostDB:ENSMUSG00000059040"/>
<dbReference type="VEuPathDB" id="HostDB:ENSMUSG00000063524"/>
<dbReference type="eggNOG" id="KOG2670">
    <property type="taxonomic scope" value="Eukaryota"/>
</dbReference>
<dbReference type="GeneTree" id="ENSGT00950000182805"/>
<dbReference type="HOGENOM" id="CLU_031223_0_0_1"/>
<dbReference type="InParanoid" id="P17182"/>
<dbReference type="OMA" id="QDDWTAW"/>
<dbReference type="OrthoDB" id="1739814at2759"/>
<dbReference type="PhylomeDB" id="P17182"/>
<dbReference type="TreeFam" id="TF300391"/>
<dbReference type="BRENDA" id="4.2.1.11">
    <property type="organism ID" value="3474"/>
</dbReference>
<dbReference type="SABIO-RK" id="P17182"/>
<dbReference type="UniPathway" id="UPA00109">
    <property type="reaction ID" value="UER00187"/>
</dbReference>
<dbReference type="BioGRID-ORCS" id="13806">
    <property type="hits" value="18 hits in 60 CRISPR screens"/>
</dbReference>
<dbReference type="BioGRID-ORCS" id="433182">
    <property type="hits" value="5 hits in 20 CRISPR screens"/>
</dbReference>
<dbReference type="ChiTaRS" id="Eno1">
    <property type="organism name" value="mouse"/>
</dbReference>
<dbReference type="PRO" id="PR:P17182"/>
<dbReference type="Proteomes" id="UP000000589">
    <property type="component" value="Chromosome 18"/>
</dbReference>
<dbReference type="Proteomes" id="UP000000589">
    <property type="component" value="Chromosome 4"/>
</dbReference>
<dbReference type="RNAct" id="P17182">
    <property type="molecule type" value="protein"/>
</dbReference>
<dbReference type="Bgee" id="ENSMUSG00000059040">
    <property type="expression patterns" value="Expressed in epiblast (generic) and 59 other cell types or tissues"/>
</dbReference>
<dbReference type="ExpressionAtlas" id="P17182">
    <property type="expression patterns" value="baseline and differential"/>
</dbReference>
<dbReference type="GO" id="GO:0009986">
    <property type="term" value="C:cell surface"/>
    <property type="evidence" value="ECO:0000314"/>
    <property type="project" value="MGI"/>
</dbReference>
<dbReference type="GO" id="GO:0005829">
    <property type="term" value="C:cytosol"/>
    <property type="evidence" value="ECO:0000314"/>
    <property type="project" value="MGI"/>
</dbReference>
<dbReference type="GO" id="GO:0043209">
    <property type="term" value="C:myelin sheath"/>
    <property type="evidence" value="ECO:0007005"/>
    <property type="project" value="UniProtKB"/>
</dbReference>
<dbReference type="GO" id="GO:0000015">
    <property type="term" value="C:phosphopyruvate hydratase complex"/>
    <property type="evidence" value="ECO:0007669"/>
    <property type="project" value="InterPro"/>
</dbReference>
<dbReference type="GO" id="GO:0005886">
    <property type="term" value="C:plasma membrane"/>
    <property type="evidence" value="ECO:0007669"/>
    <property type="project" value="UniProtKB-SubCell"/>
</dbReference>
<dbReference type="GO" id="GO:0000287">
    <property type="term" value="F:magnesium ion binding"/>
    <property type="evidence" value="ECO:0007669"/>
    <property type="project" value="InterPro"/>
</dbReference>
<dbReference type="GO" id="GO:0004634">
    <property type="term" value="F:phosphopyruvate hydratase activity"/>
    <property type="evidence" value="ECO:0000314"/>
    <property type="project" value="MGI"/>
</dbReference>
<dbReference type="GO" id="GO:0003723">
    <property type="term" value="F:RNA binding"/>
    <property type="evidence" value="ECO:0000314"/>
    <property type="project" value="MGI"/>
</dbReference>
<dbReference type="GO" id="GO:0061621">
    <property type="term" value="P:canonical glycolysis"/>
    <property type="evidence" value="ECO:0000250"/>
    <property type="project" value="UniProtKB"/>
</dbReference>
<dbReference type="GO" id="GO:0098761">
    <property type="term" value="P:cellular response to interleukin-7"/>
    <property type="evidence" value="ECO:0000314"/>
    <property type="project" value="MGI"/>
</dbReference>
<dbReference type="GO" id="GO:0006094">
    <property type="term" value="P:gluconeogenesis"/>
    <property type="evidence" value="ECO:0000315"/>
    <property type="project" value="MGI"/>
</dbReference>
<dbReference type="GO" id="GO:0046166">
    <property type="term" value="P:glyceraldehyde-3-phosphate biosynthetic process"/>
    <property type="evidence" value="ECO:0000266"/>
    <property type="project" value="MGI"/>
</dbReference>
<dbReference type="GO" id="GO:0006096">
    <property type="term" value="P:glycolytic process"/>
    <property type="evidence" value="ECO:0000314"/>
    <property type="project" value="MGI"/>
</dbReference>
<dbReference type="GO" id="GO:0001701">
    <property type="term" value="P:in utero embryonic development"/>
    <property type="evidence" value="ECO:0000315"/>
    <property type="project" value="MGI"/>
</dbReference>
<dbReference type="CDD" id="cd03313">
    <property type="entry name" value="enolase"/>
    <property type="match status" value="1"/>
</dbReference>
<dbReference type="FunFam" id="3.30.390.10:FF:000001">
    <property type="entry name" value="Enolase"/>
    <property type="match status" value="1"/>
</dbReference>
<dbReference type="FunFam" id="3.20.20.120:FF:000002">
    <property type="entry name" value="Enolase 1"/>
    <property type="match status" value="1"/>
</dbReference>
<dbReference type="Gene3D" id="3.20.20.120">
    <property type="entry name" value="Enolase-like C-terminal domain"/>
    <property type="match status" value="1"/>
</dbReference>
<dbReference type="Gene3D" id="3.30.390.10">
    <property type="entry name" value="Enolase-like, N-terminal domain"/>
    <property type="match status" value="1"/>
</dbReference>
<dbReference type="HAMAP" id="MF_00318">
    <property type="entry name" value="Enolase"/>
    <property type="match status" value="1"/>
</dbReference>
<dbReference type="InterPro" id="IPR000941">
    <property type="entry name" value="Enolase"/>
</dbReference>
<dbReference type="InterPro" id="IPR036849">
    <property type="entry name" value="Enolase-like_C_sf"/>
</dbReference>
<dbReference type="InterPro" id="IPR029017">
    <property type="entry name" value="Enolase-like_N"/>
</dbReference>
<dbReference type="InterPro" id="IPR020810">
    <property type="entry name" value="Enolase_C"/>
</dbReference>
<dbReference type="InterPro" id="IPR020809">
    <property type="entry name" value="Enolase_CS"/>
</dbReference>
<dbReference type="InterPro" id="IPR020811">
    <property type="entry name" value="Enolase_N"/>
</dbReference>
<dbReference type="NCBIfam" id="TIGR01060">
    <property type="entry name" value="eno"/>
    <property type="match status" value="1"/>
</dbReference>
<dbReference type="PANTHER" id="PTHR11902:SF55">
    <property type="entry name" value="ALPHA-ENOLASE"/>
    <property type="match status" value="1"/>
</dbReference>
<dbReference type="PANTHER" id="PTHR11902">
    <property type="entry name" value="ENOLASE"/>
    <property type="match status" value="1"/>
</dbReference>
<dbReference type="Pfam" id="PF00113">
    <property type="entry name" value="Enolase_C"/>
    <property type="match status" value="1"/>
</dbReference>
<dbReference type="Pfam" id="PF03952">
    <property type="entry name" value="Enolase_N"/>
    <property type="match status" value="1"/>
</dbReference>
<dbReference type="PIRSF" id="PIRSF001400">
    <property type="entry name" value="Enolase"/>
    <property type="match status" value="1"/>
</dbReference>
<dbReference type="PRINTS" id="PR00148">
    <property type="entry name" value="ENOLASE"/>
</dbReference>
<dbReference type="SFLD" id="SFLDS00001">
    <property type="entry name" value="Enolase"/>
    <property type="match status" value="1"/>
</dbReference>
<dbReference type="SFLD" id="SFLDF00002">
    <property type="entry name" value="enolase"/>
    <property type="match status" value="1"/>
</dbReference>
<dbReference type="SMART" id="SM01192">
    <property type="entry name" value="Enolase_C"/>
    <property type="match status" value="1"/>
</dbReference>
<dbReference type="SMART" id="SM01193">
    <property type="entry name" value="Enolase_N"/>
    <property type="match status" value="1"/>
</dbReference>
<dbReference type="SUPFAM" id="SSF51604">
    <property type="entry name" value="Enolase C-terminal domain-like"/>
    <property type="match status" value="1"/>
</dbReference>
<dbReference type="SUPFAM" id="SSF54826">
    <property type="entry name" value="Enolase N-terminal domain-like"/>
    <property type="match status" value="1"/>
</dbReference>
<dbReference type="PROSITE" id="PS00164">
    <property type="entry name" value="ENOLASE"/>
    <property type="match status" value="1"/>
</dbReference>
<keyword id="KW-0007">Acetylation</keyword>
<keyword id="KW-1003">Cell membrane</keyword>
<keyword id="KW-0963">Cytoplasm</keyword>
<keyword id="KW-0903">Direct protein sequencing</keyword>
<keyword id="KW-0324">Glycolysis</keyword>
<keyword id="KW-0379">Hydroxylation</keyword>
<keyword id="KW-1017">Isopeptide bond</keyword>
<keyword id="KW-0456">Lyase</keyword>
<keyword id="KW-0460">Magnesium</keyword>
<keyword id="KW-0472">Membrane</keyword>
<keyword id="KW-0479">Metal-binding</keyword>
<keyword id="KW-0597">Phosphoprotein</keyword>
<keyword id="KW-1185">Reference proteome</keyword>
<keyword id="KW-0832">Ubl conjugation</keyword>
<feature type="initiator methionine" description="Removed" evidence="3">
    <location>
        <position position="1"/>
    </location>
</feature>
<feature type="chain" id="PRO_0000134098" description="Alpha-enolase">
    <location>
        <begin position="2"/>
        <end position="434"/>
    </location>
</feature>
<feature type="region of interest" description="Required for interaction with PLG" evidence="1">
    <location>
        <begin position="405"/>
        <end position="434"/>
    </location>
</feature>
<feature type="active site" description="Proton donor" evidence="2">
    <location>
        <position position="210"/>
    </location>
</feature>
<feature type="active site" description="Proton acceptor" evidence="2">
    <location>
        <position position="343"/>
    </location>
</feature>
<feature type="binding site" evidence="3">
    <location>
        <position position="40"/>
    </location>
    <ligand>
        <name>Mg(2+)</name>
        <dbReference type="ChEBI" id="CHEBI:18420"/>
        <label>1</label>
    </ligand>
</feature>
<feature type="binding site" evidence="2">
    <location>
        <position position="158"/>
    </location>
    <ligand>
        <name>substrate</name>
    </ligand>
</feature>
<feature type="binding site" evidence="2">
    <location>
        <position position="167"/>
    </location>
    <ligand>
        <name>substrate</name>
    </ligand>
</feature>
<feature type="binding site" evidence="3">
    <location>
        <position position="245"/>
    </location>
    <ligand>
        <name>Mg(2+)</name>
        <dbReference type="ChEBI" id="CHEBI:18420"/>
        <label>2</label>
    </ligand>
</feature>
<feature type="binding site" evidence="3">
    <location>
        <position position="293"/>
    </location>
    <ligand>
        <name>Mg(2+)</name>
        <dbReference type="ChEBI" id="CHEBI:18420"/>
        <label>2</label>
    </ligand>
</feature>
<feature type="binding site" evidence="2">
    <location>
        <position position="293"/>
    </location>
    <ligand>
        <name>substrate</name>
    </ligand>
</feature>
<feature type="binding site" evidence="3">
    <location>
        <position position="318"/>
    </location>
    <ligand>
        <name>Mg(2+)</name>
        <dbReference type="ChEBI" id="CHEBI:18420"/>
        <label>2</label>
    </ligand>
</feature>
<feature type="binding site" evidence="2">
    <location>
        <position position="318"/>
    </location>
    <ligand>
        <name>substrate</name>
    </ligand>
</feature>
<feature type="binding site" evidence="2">
    <location>
        <begin position="370"/>
        <end position="373"/>
    </location>
    <ligand>
        <name>substrate</name>
    </ligand>
</feature>
<feature type="binding site" evidence="2">
    <location>
        <position position="394"/>
    </location>
    <ligand>
        <name>substrate</name>
    </ligand>
</feature>
<feature type="modified residue" description="N-acetylserine" evidence="3">
    <location>
        <position position="2"/>
    </location>
</feature>
<feature type="modified residue" description="Phosphotyrosine" evidence="9">
    <location>
        <position position="44"/>
    </location>
</feature>
<feature type="modified residue" description="N6-acetyllysine; alternate" evidence="11">
    <location>
        <position position="60"/>
    </location>
</feature>
<feature type="modified residue" description="N6-succinyllysine; alternate" evidence="11">
    <location>
        <position position="60"/>
    </location>
</feature>
<feature type="modified residue" description="N6-acetyllysine" evidence="3">
    <location>
        <position position="71"/>
    </location>
</feature>
<feature type="modified residue" description="N6-acetyllysine; alternate" evidence="11">
    <location>
        <position position="89"/>
    </location>
</feature>
<feature type="modified residue" description="N6-succinyllysine; alternate" evidence="11">
    <location>
        <position position="89"/>
    </location>
</feature>
<feature type="modified residue" description="N6-acetyllysine" evidence="11">
    <location>
        <position position="92"/>
    </location>
</feature>
<feature type="modified residue" description="N6-acetyllysine" evidence="11">
    <location>
        <position position="126"/>
    </location>
</feature>
<feature type="modified residue" description="N6-acetyllysine" evidence="11">
    <location>
        <position position="193"/>
    </location>
</feature>
<feature type="modified residue" description="N6-acetyllysine" evidence="3">
    <location>
        <position position="199"/>
    </location>
</feature>
<feature type="modified residue" description="N6-acetyllysine; alternate" evidence="11">
    <location>
        <position position="202"/>
    </location>
</feature>
<feature type="modified residue" description="N6-(2-hydroxyisobutyryl)lysine; alternate" evidence="3">
    <location>
        <position position="228"/>
    </location>
</feature>
<feature type="modified residue" description="N6-acetyllysine; alternate" evidence="11">
    <location>
        <position position="228"/>
    </location>
</feature>
<feature type="modified residue" description="N6-succinyllysine; alternate" evidence="11">
    <location>
        <position position="228"/>
    </location>
</feature>
<feature type="modified residue" description="N6-acetyllysine; alternate" evidence="3">
    <location>
        <position position="233"/>
    </location>
</feature>
<feature type="modified residue" description="N6-malonyllysine; alternate" evidence="1">
    <location>
        <position position="233"/>
    </location>
</feature>
<feature type="modified residue" description="Phosphoserine" evidence="3">
    <location>
        <position position="254"/>
    </location>
</feature>
<feature type="modified residue" description="N6-acetyllysine" evidence="11">
    <location>
        <position position="256"/>
    </location>
</feature>
<feature type="modified residue" description="Phosphoserine" evidence="10">
    <location>
        <position position="263"/>
    </location>
</feature>
<feature type="modified residue" description="N6-(2-hydroxyisobutyryl)lysine; alternate" evidence="3">
    <location>
        <position position="281"/>
    </location>
</feature>
<feature type="modified residue" description="N6-acetyllysine; alternate" evidence="3">
    <location>
        <position position="281"/>
    </location>
</feature>
<feature type="modified residue" description="Phosphotyrosine" evidence="3">
    <location>
        <position position="287"/>
    </location>
</feature>
<feature type="modified residue" description="Phosphoserine" evidence="3">
    <location>
        <position position="291"/>
    </location>
</feature>
<feature type="modified residue" description="N6-acetyllysine" evidence="11">
    <location>
        <position position="335"/>
    </location>
</feature>
<feature type="modified residue" description="N6-acetyllysine" evidence="11">
    <location>
        <position position="343"/>
    </location>
</feature>
<feature type="modified residue" description="N6-acetyllysine" evidence="11">
    <location>
        <position position="406"/>
    </location>
</feature>
<feature type="modified residue" description="N6-acetyllysine; alternate" evidence="3">
    <location>
        <position position="420"/>
    </location>
</feature>
<feature type="modified residue" description="N6-malonyllysine; alternate" evidence="1">
    <location>
        <position position="420"/>
    </location>
</feature>
<feature type="modified residue" description="N6-succinyllysine; alternate" evidence="11">
    <location>
        <position position="420"/>
    </location>
</feature>
<feature type="cross-link" description="Glycyl lysine isopeptide (Lys-Gly) (interchain with G-Cter in SUMO2); alternate" evidence="3">
    <location>
        <position position="202"/>
    </location>
</feature>
<feature type="sequence conflict" description="In Ref. 1; CAA36605." evidence="8" ref="1">
    <original>L</original>
    <variation>P</variation>
    <location>
        <position position="359"/>
    </location>
</feature>
<name>ENOA_MOUSE</name>
<accession>P17182</accession>
<accession>Q99KT7</accession>
<accession>Q9DCY7</accession>
<organism>
    <name type="scientific">Mus musculus</name>
    <name type="common">Mouse</name>
    <dbReference type="NCBI Taxonomy" id="10090"/>
    <lineage>
        <taxon>Eukaryota</taxon>
        <taxon>Metazoa</taxon>
        <taxon>Chordata</taxon>
        <taxon>Craniata</taxon>
        <taxon>Vertebrata</taxon>
        <taxon>Euteleostomi</taxon>
        <taxon>Mammalia</taxon>
        <taxon>Eutheria</taxon>
        <taxon>Euarchontoglires</taxon>
        <taxon>Glires</taxon>
        <taxon>Rodentia</taxon>
        <taxon>Myomorpha</taxon>
        <taxon>Muroidea</taxon>
        <taxon>Muridae</taxon>
        <taxon>Murinae</taxon>
        <taxon>Mus</taxon>
        <taxon>Mus</taxon>
    </lineage>
</organism>
<reference key="1">
    <citation type="journal article" date="1990" name="Nucleic Acids Res.">
        <title>Nucleotide sequences of cDNAs alpha and gamma enolase mRNAs from mouse brain.</title>
        <authorList>
            <person name="Kaghad M."/>
            <person name="Dumont X."/>
            <person name="Chalon P."/>
            <person name="Lelias J.M."/>
            <person name="Lamande N."/>
            <person name="Lucas M."/>
            <person name="Lazar M."/>
            <person name="Caput D."/>
        </authorList>
    </citation>
    <scope>NUCLEOTIDE SEQUENCE [MRNA]</scope>
    <source>
        <tissue>Brain</tissue>
    </source>
</reference>
<reference key="2">
    <citation type="journal article" date="2005" name="Science">
        <title>The transcriptional landscape of the mammalian genome.</title>
        <authorList>
            <person name="Carninci P."/>
            <person name="Kasukawa T."/>
            <person name="Katayama S."/>
            <person name="Gough J."/>
            <person name="Frith M.C."/>
            <person name="Maeda N."/>
            <person name="Oyama R."/>
            <person name="Ravasi T."/>
            <person name="Lenhard B."/>
            <person name="Wells C."/>
            <person name="Kodzius R."/>
            <person name="Shimokawa K."/>
            <person name="Bajic V.B."/>
            <person name="Brenner S.E."/>
            <person name="Batalov S."/>
            <person name="Forrest A.R."/>
            <person name="Zavolan M."/>
            <person name="Davis M.J."/>
            <person name="Wilming L.G."/>
            <person name="Aidinis V."/>
            <person name="Allen J.E."/>
            <person name="Ambesi-Impiombato A."/>
            <person name="Apweiler R."/>
            <person name="Aturaliya R.N."/>
            <person name="Bailey T.L."/>
            <person name="Bansal M."/>
            <person name="Baxter L."/>
            <person name="Beisel K.W."/>
            <person name="Bersano T."/>
            <person name="Bono H."/>
            <person name="Chalk A.M."/>
            <person name="Chiu K.P."/>
            <person name="Choudhary V."/>
            <person name="Christoffels A."/>
            <person name="Clutterbuck D.R."/>
            <person name="Crowe M.L."/>
            <person name="Dalla E."/>
            <person name="Dalrymple B.P."/>
            <person name="de Bono B."/>
            <person name="Della Gatta G."/>
            <person name="di Bernardo D."/>
            <person name="Down T."/>
            <person name="Engstrom P."/>
            <person name="Fagiolini M."/>
            <person name="Faulkner G."/>
            <person name="Fletcher C.F."/>
            <person name="Fukushima T."/>
            <person name="Furuno M."/>
            <person name="Futaki S."/>
            <person name="Gariboldi M."/>
            <person name="Georgii-Hemming P."/>
            <person name="Gingeras T.R."/>
            <person name="Gojobori T."/>
            <person name="Green R.E."/>
            <person name="Gustincich S."/>
            <person name="Harbers M."/>
            <person name="Hayashi Y."/>
            <person name="Hensch T.K."/>
            <person name="Hirokawa N."/>
            <person name="Hill D."/>
            <person name="Huminiecki L."/>
            <person name="Iacono M."/>
            <person name="Ikeo K."/>
            <person name="Iwama A."/>
            <person name="Ishikawa T."/>
            <person name="Jakt M."/>
            <person name="Kanapin A."/>
            <person name="Katoh M."/>
            <person name="Kawasawa Y."/>
            <person name="Kelso J."/>
            <person name="Kitamura H."/>
            <person name="Kitano H."/>
            <person name="Kollias G."/>
            <person name="Krishnan S.P."/>
            <person name="Kruger A."/>
            <person name="Kummerfeld S.K."/>
            <person name="Kurochkin I.V."/>
            <person name="Lareau L.F."/>
            <person name="Lazarevic D."/>
            <person name="Lipovich L."/>
            <person name="Liu J."/>
            <person name="Liuni S."/>
            <person name="McWilliam S."/>
            <person name="Madan Babu M."/>
            <person name="Madera M."/>
            <person name="Marchionni L."/>
            <person name="Matsuda H."/>
            <person name="Matsuzawa S."/>
            <person name="Miki H."/>
            <person name="Mignone F."/>
            <person name="Miyake S."/>
            <person name="Morris K."/>
            <person name="Mottagui-Tabar S."/>
            <person name="Mulder N."/>
            <person name="Nakano N."/>
            <person name="Nakauchi H."/>
            <person name="Ng P."/>
            <person name="Nilsson R."/>
            <person name="Nishiguchi S."/>
            <person name="Nishikawa S."/>
            <person name="Nori F."/>
            <person name="Ohara O."/>
            <person name="Okazaki Y."/>
            <person name="Orlando V."/>
            <person name="Pang K.C."/>
            <person name="Pavan W.J."/>
            <person name="Pavesi G."/>
            <person name="Pesole G."/>
            <person name="Petrovsky N."/>
            <person name="Piazza S."/>
            <person name="Reed J."/>
            <person name="Reid J.F."/>
            <person name="Ring B.Z."/>
            <person name="Ringwald M."/>
            <person name="Rost B."/>
            <person name="Ruan Y."/>
            <person name="Salzberg S.L."/>
            <person name="Sandelin A."/>
            <person name="Schneider C."/>
            <person name="Schoenbach C."/>
            <person name="Sekiguchi K."/>
            <person name="Semple C.A."/>
            <person name="Seno S."/>
            <person name="Sessa L."/>
            <person name="Sheng Y."/>
            <person name="Shibata Y."/>
            <person name="Shimada H."/>
            <person name="Shimada K."/>
            <person name="Silva D."/>
            <person name="Sinclair B."/>
            <person name="Sperling S."/>
            <person name="Stupka E."/>
            <person name="Sugiura K."/>
            <person name="Sultana R."/>
            <person name="Takenaka Y."/>
            <person name="Taki K."/>
            <person name="Tammoja K."/>
            <person name="Tan S.L."/>
            <person name="Tang S."/>
            <person name="Taylor M.S."/>
            <person name="Tegner J."/>
            <person name="Teichmann S.A."/>
            <person name="Ueda H.R."/>
            <person name="van Nimwegen E."/>
            <person name="Verardo R."/>
            <person name="Wei C.L."/>
            <person name="Yagi K."/>
            <person name="Yamanishi H."/>
            <person name="Zabarovsky E."/>
            <person name="Zhu S."/>
            <person name="Zimmer A."/>
            <person name="Hide W."/>
            <person name="Bult C."/>
            <person name="Grimmond S.M."/>
            <person name="Teasdale R.D."/>
            <person name="Liu E.T."/>
            <person name="Brusic V."/>
            <person name="Quackenbush J."/>
            <person name="Wahlestedt C."/>
            <person name="Mattick J.S."/>
            <person name="Hume D.A."/>
            <person name="Kai C."/>
            <person name="Sasaki D."/>
            <person name="Tomaru Y."/>
            <person name="Fukuda S."/>
            <person name="Kanamori-Katayama M."/>
            <person name="Suzuki M."/>
            <person name="Aoki J."/>
            <person name="Arakawa T."/>
            <person name="Iida J."/>
            <person name="Imamura K."/>
            <person name="Itoh M."/>
            <person name="Kato T."/>
            <person name="Kawaji H."/>
            <person name="Kawagashira N."/>
            <person name="Kawashima T."/>
            <person name="Kojima M."/>
            <person name="Kondo S."/>
            <person name="Konno H."/>
            <person name="Nakano K."/>
            <person name="Ninomiya N."/>
            <person name="Nishio T."/>
            <person name="Okada M."/>
            <person name="Plessy C."/>
            <person name="Shibata K."/>
            <person name="Shiraki T."/>
            <person name="Suzuki S."/>
            <person name="Tagami M."/>
            <person name="Waki K."/>
            <person name="Watahiki A."/>
            <person name="Okamura-Oho Y."/>
            <person name="Suzuki H."/>
            <person name="Kawai J."/>
            <person name="Hayashizaki Y."/>
        </authorList>
    </citation>
    <scope>NUCLEOTIDE SEQUENCE [LARGE SCALE MRNA]</scope>
    <source>
        <strain>C57BL/6J</strain>
        <tissue>Kidney</tissue>
    </source>
</reference>
<reference key="3">
    <citation type="journal article" date="2004" name="Genome Res.">
        <title>The status, quality, and expansion of the NIH full-length cDNA project: the Mammalian Gene Collection (MGC).</title>
        <authorList>
            <consortium name="The MGC Project Team"/>
        </authorList>
    </citation>
    <scope>NUCLEOTIDE SEQUENCE [LARGE SCALE MRNA]</scope>
    <source>
        <strain>Czech II</strain>
        <strain>FVB/N</strain>
        <tissue>Mammary gland</tissue>
        <tissue>Mammary tumor</tissue>
    </source>
</reference>
<reference key="4">
    <citation type="submission" date="2009-01" db="UniProtKB">
        <authorList>
            <person name="Lubec G."/>
            <person name="Kang S.U."/>
            <person name="Klug S."/>
            <person name="Yang J.W."/>
            <person name="Zigmond M."/>
            <person name="Sunyer B."/>
            <person name="Chen W.-Q."/>
        </authorList>
    </citation>
    <scope>PROTEIN SEQUENCE OF 10-28; 33-50; 61-120; 133-179; 184-193; 203-228; 234-253; 257-262; 270-281; 307-326; 344-358; 373-394 AND 413-420</scope>
    <scope>IDENTIFICATION BY MASS SPECTROMETRY</scope>
    <source>
        <strain>C57BL/6J</strain>
        <strain>OF1</strain>
        <tissue>Brain</tissue>
        <tissue>Hippocampus</tissue>
    </source>
</reference>
<reference key="5">
    <citation type="journal article" date="1993" name="Arterioscler. Thromb.">
        <title>Cholesteryl ester loading of mouse peritoneal macrophages is associated with changes in the expression or modification of specific cellular proteins, including increase in an alpha-enolase isoform.</title>
        <authorList>
            <person name="Bottalico L.A."/>
            <person name="Kendrick N.C."/>
            <person name="Keller A."/>
            <person name="Li Y."/>
            <person name="Tabas I."/>
        </authorList>
    </citation>
    <scope>PROTEIN SEQUENCE OF 60-71; 100-114; 184-198 AND 246-259</scope>
    <source>
        <tissue>Macrophage</tissue>
    </source>
</reference>
<reference key="6">
    <citation type="journal article" date="1997" name="Biochem. J.">
        <title>Biochemical characterization of the mouse muscle-specific enolase: developmental changes in electrophoretic variants and selective binding to other proteins.</title>
        <authorList>
            <person name="Merkulova T."/>
            <person name="Lucas M."/>
            <person name="Jabet C."/>
            <person name="Lamande N."/>
            <person name="Rouzeau J.-D."/>
            <person name="Gros F."/>
            <person name="Lazar M."/>
            <person name="Keller A."/>
        </authorList>
    </citation>
    <scope>INTERACTION WITH PKM; PGM; CKM; ALDO AND TROPONIN</scope>
    <scope>DEVELOPMENTAL STAGE</scope>
</reference>
<reference key="7">
    <citation type="journal article" date="2000" name="Biol. Cell">
        <title>Fibre-type distribution and subcellular localisation of alpha and beta enolase in mouse striated muscle.</title>
        <authorList>
            <person name="Keller A."/>
            <person name="Demeurie J."/>
            <person name="Merkulova T."/>
            <person name="Geraud G."/>
            <person name="Cywiner-Golenzer C."/>
            <person name="Lucas M."/>
            <person name="Chatelet F.-P."/>
        </authorList>
    </citation>
    <scope>SUBCELLULAR LOCATION</scope>
    <scope>TISSUE SPECIFICITY</scope>
</reference>
<reference key="8">
    <citation type="journal article" date="2005" name="Biochem. Biophys. Res. Commun.">
        <title>Proteomic identification of proteins conjugated to ISG15 in mouse and human cells.</title>
        <authorList>
            <person name="Giannakopoulos N.V."/>
            <person name="Luo J.K."/>
            <person name="Papov V."/>
            <person name="Zou W."/>
            <person name="Lenschow D.J."/>
            <person name="Jacobs B.S."/>
            <person name="Borden E.C."/>
            <person name="Li J."/>
            <person name="Virgin H.W."/>
            <person name="Zhang D.E."/>
        </authorList>
    </citation>
    <scope>ISGYLATION</scope>
</reference>
<reference key="9">
    <citation type="journal article" date="2008" name="J. Proteome Res.">
        <title>Large-scale identification and evolution indexing of tyrosine phosphorylation sites from murine brain.</title>
        <authorList>
            <person name="Ballif B.A."/>
            <person name="Carey G.R."/>
            <person name="Sunyaev S.R."/>
            <person name="Gygi S.P."/>
        </authorList>
    </citation>
    <scope>PHOSPHORYLATION [LARGE SCALE ANALYSIS] AT TYR-44</scope>
    <scope>IDENTIFICATION BY MASS SPECTROMETRY [LARGE SCALE ANALYSIS]</scope>
    <source>
        <tissue>Brain</tissue>
    </source>
</reference>
<reference key="10">
    <citation type="journal article" date="2010" name="Cell">
        <title>A tissue-specific atlas of mouse protein phosphorylation and expression.</title>
        <authorList>
            <person name="Huttlin E.L."/>
            <person name="Jedrychowski M.P."/>
            <person name="Elias J.E."/>
            <person name="Goswami T."/>
            <person name="Rad R."/>
            <person name="Beausoleil S.A."/>
            <person name="Villen J."/>
            <person name="Haas W."/>
            <person name="Sowa M.E."/>
            <person name="Gygi S.P."/>
        </authorList>
    </citation>
    <scope>PHOSPHORYLATION [LARGE SCALE ANALYSIS] AT SER-263</scope>
    <scope>IDENTIFICATION BY MASS SPECTROMETRY [LARGE SCALE ANALYSIS]</scope>
    <source>
        <tissue>Brain</tissue>
        <tissue>Brown adipose tissue</tissue>
        <tissue>Heart</tissue>
        <tissue>Kidney</tissue>
        <tissue>Liver</tissue>
        <tissue>Lung</tissue>
        <tissue>Pancreas</tissue>
        <tissue>Spleen</tissue>
        <tissue>Testis</tissue>
    </source>
</reference>
<reference key="11">
    <citation type="journal article" date="2013" name="Biol. Reprod.">
        <title>Disruption of a spermatogenic cell-specific mouse enolase 4 (eno4) gene causes sperm structural defects and male infertility.</title>
        <authorList>
            <person name="Nakamura N."/>
            <person name="Dai Q."/>
            <person name="Williams J."/>
            <person name="Goulding E.H."/>
            <person name="Willis W.D."/>
            <person name="Brown P.R."/>
            <person name="Eddy E.M."/>
        </authorList>
    </citation>
    <scope>INTERACTION WITH ENO4 AND PGAM2</scope>
    <scope>TISSUE SPECIFICITY</scope>
</reference>
<reference key="12">
    <citation type="journal article" date="2013" name="Mol. Cell">
        <title>SIRT5-mediated lysine desuccinylation impacts diverse metabolic pathways.</title>
        <authorList>
            <person name="Park J."/>
            <person name="Chen Y."/>
            <person name="Tishkoff D.X."/>
            <person name="Peng C."/>
            <person name="Tan M."/>
            <person name="Dai L."/>
            <person name="Xie Z."/>
            <person name="Zhang Y."/>
            <person name="Zwaans B.M."/>
            <person name="Skinner M.E."/>
            <person name="Lombard D.B."/>
            <person name="Zhao Y."/>
        </authorList>
    </citation>
    <scope>ACETYLATION [LARGE SCALE ANALYSIS] AT LYS-60; LYS-89; LYS-92; LYS-126; LYS-193; LYS-202; LYS-228; LYS-256; LYS-335; LYS-343 AND LYS-406</scope>
    <scope>SUCCINYLATION [LARGE SCALE ANALYSIS] AT LYS-60; LYS-89; LYS-228 AND LYS-420</scope>
    <scope>IDENTIFICATION BY MASS SPECTROMETRY [LARGE SCALE ANALYSIS]</scope>
    <source>
        <tissue>Embryonic fibroblast</tissue>
    </source>
</reference>